<proteinExistence type="inferred from homology"/>
<comment type="function">
    <text evidence="1">DNA-dependent RNA polymerase catalyzes the transcription of DNA into RNA using the four ribonucleoside triphosphates as substrates.</text>
</comment>
<comment type="catalytic activity">
    <reaction evidence="1">
        <text>RNA(n) + a ribonucleoside 5'-triphosphate = RNA(n+1) + diphosphate</text>
        <dbReference type="Rhea" id="RHEA:21248"/>
        <dbReference type="Rhea" id="RHEA-COMP:14527"/>
        <dbReference type="Rhea" id="RHEA-COMP:17342"/>
        <dbReference type="ChEBI" id="CHEBI:33019"/>
        <dbReference type="ChEBI" id="CHEBI:61557"/>
        <dbReference type="ChEBI" id="CHEBI:140395"/>
        <dbReference type="EC" id="2.7.7.6"/>
    </reaction>
</comment>
<comment type="cofactor">
    <cofactor evidence="1">
        <name>Mg(2+)</name>
        <dbReference type="ChEBI" id="CHEBI:18420"/>
    </cofactor>
    <text evidence="1">Binds 1 Mg(2+) ion per subunit.</text>
</comment>
<comment type="cofactor">
    <cofactor evidence="1">
        <name>Zn(2+)</name>
        <dbReference type="ChEBI" id="CHEBI:29105"/>
    </cofactor>
    <text evidence="1">Binds 2 Zn(2+) ions per subunit.</text>
</comment>
<comment type="subunit">
    <text evidence="1">The RNAP catalytic core consists of 2 alpha, 1 beta, 1 beta' and 1 omega subunit. When a sigma factor is associated with the core the holoenzyme is formed, which can initiate transcription.</text>
</comment>
<comment type="similarity">
    <text evidence="1">Belongs to the RNA polymerase beta' chain family.</text>
</comment>
<reference key="1">
    <citation type="journal article" date="2000" name="Nature">
        <title>The complete sequence of the mucosal pathogen Ureaplasma urealyticum.</title>
        <authorList>
            <person name="Glass J.I."/>
            <person name="Lefkowitz E.J."/>
            <person name="Glass J.S."/>
            <person name="Heiner C.R."/>
            <person name="Chen E.Y."/>
            <person name="Cassell G.H."/>
        </authorList>
    </citation>
    <scope>NUCLEOTIDE SEQUENCE [LARGE SCALE GENOMIC DNA]</scope>
    <source>
        <strain>ATCC 700970</strain>
    </source>
</reference>
<accession>Q9PQV5</accession>
<keyword id="KW-0240">DNA-directed RNA polymerase</keyword>
<keyword id="KW-0460">Magnesium</keyword>
<keyword id="KW-0479">Metal-binding</keyword>
<keyword id="KW-0548">Nucleotidyltransferase</keyword>
<keyword id="KW-1185">Reference proteome</keyword>
<keyword id="KW-0804">Transcription</keyword>
<keyword id="KW-0808">Transferase</keyword>
<keyword id="KW-0862">Zinc</keyword>
<gene>
    <name evidence="1" type="primary">rpoC</name>
    <name type="ordered locus">UU188</name>
</gene>
<organism>
    <name type="scientific">Ureaplasma parvum serovar 3 (strain ATCC 700970)</name>
    <dbReference type="NCBI Taxonomy" id="273119"/>
    <lineage>
        <taxon>Bacteria</taxon>
        <taxon>Bacillati</taxon>
        <taxon>Mycoplasmatota</taxon>
        <taxon>Mycoplasmoidales</taxon>
        <taxon>Mycoplasmoidaceae</taxon>
        <taxon>Ureaplasma</taxon>
    </lineage>
</organism>
<feature type="chain" id="PRO_0000067826" description="DNA-directed RNA polymerase subunit beta'">
    <location>
        <begin position="1"/>
        <end position="1305"/>
    </location>
</feature>
<feature type="binding site" evidence="1">
    <location>
        <position position="59"/>
    </location>
    <ligand>
        <name>Zn(2+)</name>
        <dbReference type="ChEBI" id="CHEBI:29105"/>
        <label>1</label>
    </ligand>
</feature>
<feature type="binding site" evidence="1">
    <location>
        <position position="61"/>
    </location>
    <ligand>
        <name>Zn(2+)</name>
        <dbReference type="ChEBI" id="CHEBI:29105"/>
        <label>1</label>
    </ligand>
</feature>
<feature type="binding site" evidence="1">
    <location>
        <position position="74"/>
    </location>
    <ligand>
        <name>Zn(2+)</name>
        <dbReference type="ChEBI" id="CHEBI:29105"/>
        <label>1</label>
    </ligand>
</feature>
<feature type="binding site" evidence="1">
    <location>
        <position position="77"/>
    </location>
    <ligand>
        <name>Zn(2+)</name>
        <dbReference type="ChEBI" id="CHEBI:29105"/>
        <label>1</label>
    </ligand>
</feature>
<feature type="binding site" evidence="1">
    <location>
        <position position="527"/>
    </location>
    <ligand>
        <name>Mg(2+)</name>
        <dbReference type="ChEBI" id="CHEBI:18420"/>
    </ligand>
</feature>
<feature type="binding site" evidence="1">
    <location>
        <position position="529"/>
    </location>
    <ligand>
        <name>Mg(2+)</name>
        <dbReference type="ChEBI" id="CHEBI:18420"/>
    </ligand>
</feature>
<feature type="binding site" evidence="1">
    <location>
        <position position="531"/>
    </location>
    <ligand>
        <name>Mg(2+)</name>
        <dbReference type="ChEBI" id="CHEBI:18420"/>
    </ligand>
</feature>
<feature type="binding site" evidence="1">
    <location>
        <position position="922"/>
    </location>
    <ligand>
        <name>Zn(2+)</name>
        <dbReference type="ChEBI" id="CHEBI:29105"/>
        <label>2</label>
    </ligand>
</feature>
<feature type="binding site" evidence="1">
    <location>
        <position position="997"/>
    </location>
    <ligand>
        <name>Zn(2+)</name>
        <dbReference type="ChEBI" id="CHEBI:29105"/>
        <label>2</label>
    </ligand>
</feature>
<feature type="binding site" evidence="1">
    <location>
        <position position="1004"/>
    </location>
    <ligand>
        <name>Zn(2+)</name>
        <dbReference type="ChEBI" id="CHEBI:29105"/>
        <label>2</label>
    </ligand>
</feature>
<feature type="binding site" evidence="1">
    <location>
        <position position="1007"/>
    </location>
    <ligand>
        <name>Zn(2+)</name>
        <dbReference type="ChEBI" id="CHEBI:29105"/>
        <label>2</label>
    </ligand>
</feature>
<dbReference type="EC" id="2.7.7.6" evidence="1"/>
<dbReference type="EMBL" id="AF222894">
    <property type="protein sequence ID" value="AAF30595.1"/>
    <property type="molecule type" value="Genomic_DNA"/>
</dbReference>
<dbReference type="RefSeq" id="WP_010891704.1">
    <property type="nucleotide sequence ID" value="NC_002162.1"/>
</dbReference>
<dbReference type="SMR" id="Q9PQV5"/>
<dbReference type="STRING" id="273119.UU188"/>
<dbReference type="EnsemblBacteria" id="AAF30595">
    <property type="protein sequence ID" value="AAF30595"/>
    <property type="gene ID" value="UU188"/>
</dbReference>
<dbReference type="GeneID" id="29672692"/>
<dbReference type="KEGG" id="uur:UU188"/>
<dbReference type="PATRIC" id="fig|273119.6.peg.195"/>
<dbReference type="eggNOG" id="COG0086">
    <property type="taxonomic scope" value="Bacteria"/>
</dbReference>
<dbReference type="HOGENOM" id="CLU_000524_3_1_14"/>
<dbReference type="OrthoDB" id="9815296at2"/>
<dbReference type="Proteomes" id="UP000000423">
    <property type="component" value="Chromosome"/>
</dbReference>
<dbReference type="GO" id="GO:0000428">
    <property type="term" value="C:DNA-directed RNA polymerase complex"/>
    <property type="evidence" value="ECO:0007669"/>
    <property type="project" value="UniProtKB-KW"/>
</dbReference>
<dbReference type="GO" id="GO:0003677">
    <property type="term" value="F:DNA binding"/>
    <property type="evidence" value="ECO:0007669"/>
    <property type="project" value="UniProtKB-UniRule"/>
</dbReference>
<dbReference type="GO" id="GO:0003899">
    <property type="term" value="F:DNA-directed RNA polymerase activity"/>
    <property type="evidence" value="ECO:0007669"/>
    <property type="project" value="UniProtKB-UniRule"/>
</dbReference>
<dbReference type="GO" id="GO:0000287">
    <property type="term" value="F:magnesium ion binding"/>
    <property type="evidence" value="ECO:0007669"/>
    <property type="project" value="UniProtKB-UniRule"/>
</dbReference>
<dbReference type="GO" id="GO:0008270">
    <property type="term" value="F:zinc ion binding"/>
    <property type="evidence" value="ECO:0007669"/>
    <property type="project" value="UniProtKB-UniRule"/>
</dbReference>
<dbReference type="GO" id="GO:0006351">
    <property type="term" value="P:DNA-templated transcription"/>
    <property type="evidence" value="ECO:0007669"/>
    <property type="project" value="UniProtKB-UniRule"/>
</dbReference>
<dbReference type="CDD" id="cd02655">
    <property type="entry name" value="RNAP_beta'_C"/>
    <property type="match status" value="1"/>
</dbReference>
<dbReference type="CDD" id="cd01609">
    <property type="entry name" value="RNAP_beta'_N"/>
    <property type="match status" value="1"/>
</dbReference>
<dbReference type="Gene3D" id="1.10.132.30">
    <property type="match status" value="1"/>
</dbReference>
<dbReference type="Gene3D" id="1.10.150.390">
    <property type="match status" value="1"/>
</dbReference>
<dbReference type="Gene3D" id="1.10.1790.20">
    <property type="match status" value="1"/>
</dbReference>
<dbReference type="Gene3D" id="1.10.40.90">
    <property type="match status" value="1"/>
</dbReference>
<dbReference type="Gene3D" id="2.40.40.20">
    <property type="match status" value="1"/>
</dbReference>
<dbReference type="Gene3D" id="2.40.50.100">
    <property type="match status" value="1"/>
</dbReference>
<dbReference type="Gene3D" id="4.10.860.120">
    <property type="entry name" value="RNA polymerase II, clamp domain"/>
    <property type="match status" value="1"/>
</dbReference>
<dbReference type="Gene3D" id="1.10.274.100">
    <property type="entry name" value="RNA polymerase Rpb1, domain 3"/>
    <property type="match status" value="1"/>
</dbReference>
<dbReference type="HAMAP" id="MF_01322">
    <property type="entry name" value="RNApol_bact_RpoC"/>
    <property type="match status" value="1"/>
</dbReference>
<dbReference type="InterPro" id="IPR045867">
    <property type="entry name" value="DNA-dir_RpoC_beta_prime"/>
</dbReference>
<dbReference type="InterPro" id="IPR012754">
    <property type="entry name" value="DNA-dir_RpoC_beta_prime_bact"/>
</dbReference>
<dbReference type="InterPro" id="IPR000722">
    <property type="entry name" value="RNA_pol_asu"/>
</dbReference>
<dbReference type="InterPro" id="IPR006592">
    <property type="entry name" value="RNA_pol_N"/>
</dbReference>
<dbReference type="InterPro" id="IPR007080">
    <property type="entry name" value="RNA_pol_Rpb1_1"/>
</dbReference>
<dbReference type="InterPro" id="IPR007066">
    <property type="entry name" value="RNA_pol_Rpb1_3"/>
</dbReference>
<dbReference type="InterPro" id="IPR042102">
    <property type="entry name" value="RNA_pol_Rpb1_3_sf"/>
</dbReference>
<dbReference type="InterPro" id="IPR007083">
    <property type="entry name" value="RNA_pol_Rpb1_4"/>
</dbReference>
<dbReference type="InterPro" id="IPR007081">
    <property type="entry name" value="RNA_pol_Rpb1_5"/>
</dbReference>
<dbReference type="InterPro" id="IPR044893">
    <property type="entry name" value="RNA_pol_Rpb1_clamp_domain"/>
</dbReference>
<dbReference type="InterPro" id="IPR038120">
    <property type="entry name" value="Rpb1_funnel_sf"/>
</dbReference>
<dbReference type="NCBIfam" id="TIGR02386">
    <property type="entry name" value="rpoC_TIGR"/>
    <property type="match status" value="1"/>
</dbReference>
<dbReference type="PANTHER" id="PTHR19376">
    <property type="entry name" value="DNA-DIRECTED RNA POLYMERASE"/>
    <property type="match status" value="1"/>
</dbReference>
<dbReference type="PANTHER" id="PTHR19376:SF54">
    <property type="entry name" value="DNA-DIRECTED RNA POLYMERASE SUBUNIT BETA"/>
    <property type="match status" value="1"/>
</dbReference>
<dbReference type="Pfam" id="PF04997">
    <property type="entry name" value="RNA_pol_Rpb1_1"/>
    <property type="match status" value="1"/>
</dbReference>
<dbReference type="Pfam" id="PF00623">
    <property type="entry name" value="RNA_pol_Rpb1_2"/>
    <property type="match status" value="1"/>
</dbReference>
<dbReference type="Pfam" id="PF04983">
    <property type="entry name" value="RNA_pol_Rpb1_3"/>
    <property type="match status" value="1"/>
</dbReference>
<dbReference type="Pfam" id="PF05000">
    <property type="entry name" value="RNA_pol_Rpb1_4"/>
    <property type="match status" value="1"/>
</dbReference>
<dbReference type="Pfam" id="PF04998">
    <property type="entry name" value="RNA_pol_Rpb1_5"/>
    <property type="match status" value="1"/>
</dbReference>
<dbReference type="SMART" id="SM00663">
    <property type="entry name" value="RPOLA_N"/>
    <property type="match status" value="1"/>
</dbReference>
<dbReference type="SUPFAM" id="SSF64484">
    <property type="entry name" value="beta and beta-prime subunits of DNA dependent RNA-polymerase"/>
    <property type="match status" value="1"/>
</dbReference>
<sequence length="1305" mass="147970">MSQKGIKSLTISIASPEQILNWSKGEITKPETINYKSLKPEPNGLFDESIFGPSKDYECYCGKYRKVKHKGKICERCHVEITESIVRRERMGHIELAAPVAHIWFTKELPSPSKISLLLDITYKEVDQVVYFVNYIVLDEGNNVYDGKSIFNKKEVLDLTSPKNSIRSRNKLRRTLRNIQERIEDELNHEREALIQDFDYRLAVTYDQMLKDSNIPFSVKDVMAFIEKHTGVRFGIGAEAIRELLEKLNLEEEHEKIKQAIQNSPNAYDQKTKRLLRRLECVRWIKDSGSKPEWMVMTRIPVTPSETRPIISLDGGRFTTSDTNNFYRKIIIRNERLKQMQATDAPEILLDNEKRLLQEAVDSLFDNNSRKKPVVGKDKRPLKSLSNHLKGKQGLFRQNLLGKRVDYSGRSVIVVGPELKMYEVGIPALMILKLFRPYIISELIRKRDELGNEIQPICANIKLAEQKILAQDNEIWPVVEKVIKQRPVILNRAPTLHRLGIQAFEPKMVDGKAIRLHPLVTTAFNADFDGDQMAVHIPLSKEAVAEARSILLASWHILGPKDGKPIITPTQDMILGIYYLTKEKFPQVIEEMMAKDPTQARVEFINNFHIFSTQDEAIRAYKLKTIRINDVIGITTKAFNNKTFSKEGILVTTVGKIIFNQAFPVNFPYINDVKNLYGENQFEIIGMHESILDYLKAYNLKEPLTKKTLSTVIDYLYKVSEIEVVPQTMDKIKALGFKYSMISATSISAFDIPSYDQKYEYFKETDELVSKLREFYLDGKLTDDERYTKVVQAWSQTKDKVTHDIEKLINSNEYKDNPIVIMAKSGARGNTSNFTQLAGMRGLMSKSYNYDQKNNNGVIKDTIEIPIKHSFIEGLSVSEYFNSSFGARKGMTDTAMKTAKSGYMTRKLVDSTQAVVIKDHDCGTKEGIIVREIRNTKDNTSIESLKDRIVGRYSINTIYDTKNKLIIESDKLITSEIANIIQNSGIREVEVRSPLHCASLYGVCQKCFGLDLSTNKLIETGTAIGVIAAQSIGEPGTQLTMRTFHTGGVAGDTNITQGFERIKQLFDCIQPQENEKAVISQVKGTVERIEKDSNTNGYNVVIKYNKDNYVNYPTRSNAVLRVKTGDEIIAGQKITEGSIDVNDLLKYAGIENVRHYIIKEVQKVYRMQGIEISDKYIEVIISQLTNKITITNPGDSGLFVGETISINEFTEVAQNMLVNKKKPPSAINQVFGLDHAPSKSGSFLSAASFQDTKKILTDAAARSQKDMLIGLKENVILGNLIPAGTGLKDVEEVIAYGEEMYKKQY</sequence>
<protein>
    <recommendedName>
        <fullName evidence="1">DNA-directed RNA polymerase subunit beta'</fullName>
        <shortName evidence="1">RNAP subunit beta'</shortName>
        <ecNumber evidence="1">2.7.7.6</ecNumber>
    </recommendedName>
    <alternativeName>
        <fullName evidence="1">RNA polymerase subunit beta'</fullName>
    </alternativeName>
    <alternativeName>
        <fullName evidence="1">Transcriptase subunit beta'</fullName>
    </alternativeName>
</protein>
<evidence type="ECO:0000255" key="1">
    <source>
        <dbReference type="HAMAP-Rule" id="MF_01322"/>
    </source>
</evidence>
<name>RPOC_UREPA</name>